<comment type="function">
    <text evidence="2">May regulate immune response to the intracellular capsid in acting as a T-cell tolerogen, by having an immunoregulatory effect which prevents destruction of infected cells by cytotoxic T-cells. This immune regulation may predispose to chronicity during perinatal infections and prevent severe liver injury during adult infections.</text>
</comment>
<comment type="subunit">
    <text evidence="2">Homodimerizes.</text>
</comment>
<comment type="subcellular location">
    <subcellularLocation>
        <location evidence="2">Secreted</location>
    </subcellularLocation>
    <subcellularLocation>
        <location evidence="2">Host nucleus</location>
    </subcellularLocation>
</comment>
<comment type="alternative products">
    <event type="alternative initiation"/>
    <isoform>
        <id>P0C6J3-1</id>
        <name>External core antigen</name>
        <sequence type="displayed"/>
    </isoform>
    <isoform>
        <id>P06433-1</id>
        <name>Capsid protein</name>
        <sequence type="external"/>
    </isoform>
</comment>
<comment type="PTM">
    <text evidence="2">Phosphorylated.</text>
</comment>
<comment type="PTM">
    <text evidence="2">Cleaved by host furin.</text>
</comment>
<comment type="similarity">
    <text evidence="2">Belongs to the orthohepadnavirus precore antigen family.</text>
</comment>
<evidence type="ECO:0000250" key="1"/>
<evidence type="ECO:0000255" key="2">
    <source>
        <dbReference type="HAMAP-Rule" id="MF_04076"/>
    </source>
</evidence>
<evidence type="ECO:0000256" key="3">
    <source>
        <dbReference type="SAM" id="MobiDB-lite"/>
    </source>
</evidence>
<reference key="1">
    <citation type="journal article" date="1985" name="J. Virol.">
        <title>Nucleotide sequence of a cloned woodchuck hepatitis virus genome: evolutional relationship between hepadnaviruses.</title>
        <authorList>
            <person name="Kodama K."/>
            <person name="Ogasawara N."/>
            <person name="Yoshikawa H."/>
            <person name="Murakami S."/>
        </authorList>
    </citation>
    <scope>NUCLEOTIDE SEQUENCE [GENOMIC DNA]</scope>
</reference>
<organismHost>
    <name type="scientific">Marmota monax</name>
    <name type="common">Woodchuck</name>
    <dbReference type="NCBI Taxonomy" id="9995"/>
</organismHost>
<gene>
    <name evidence="2" type="primary">C</name>
</gene>
<name>HBEAG_WHV2</name>
<dbReference type="EMBL" id="M11082">
    <property type="status" value="NOT_ANNOTATED_CDS"/>
    <property type="molecule type" value="Unassigned_DNA"/>
</dbReference>
<dbReference type="SMR" id="P0C6J3"/>
<dbReference type="Proteomes" id="UP000007632">
    <property type="component" value="Genome"/>
</dbReference>
<dbReference type="GO" id="GO:0005576">
    <property type="term" value="C:extracellular region"/>
    <property type="evidence" value="ECO:0007669"/>
    <property type="project" value="UniProtKB-SubCell"/>
</dbReference>
<dbReference type="GO" id="GO:0043657">
    <property type="term" value="C:host cell"/>
    <property type="evidence" value="ECO:0007669"/>
    <property type="project" value="GOC"/>
</dbReference>
<dbReference type="GO" id="GO:0030430">
    <property type="term" value="C:host cell cytoplasm"/>
    <property type="evidence" value="ECO:0007669"/>
    <property type="project" value="UniProtKB-UniRule"/>
</dbReference>
<dbReference type="GO" id="GO:0042025">
    <property type="term" value="C:host cell nucleus"/>
    <property type="evidence" value="ECO:0007669"/>
    <property type="project" value="UniProtKB-SubCell"/>
</dbReference>
<dbReference type="GO" id="GO:0039619">
    <property type="term" value="C:T=4 icosahedral viral capsid"/>
    <property type="evidence" value="ECO:0007669"/>
    <property type="project" value="UniProtKB-UniRule"/>
</dbReference>
<dbReference type="GO" id="GO:0003677">
    <property type="term" value="F:DNA binding"/>
    <property type="evidence" value="ECO:0007669"/>
    <property type="project" value="UniProtKB-UniRule"/>
</dbReference>
<dbReference type="GO" id="GO:0003723">
    <property type="term" value="F:RNA binding"/>
    <property type="evidence" value="ECO:0007669"/>
    <property type="project" value="UniProtKB-UniRule"/>
</dbReference>
<dbReference type="GO" id="GO:0005198">
    <property type="term" value="F:structural molecule activity"/>
    <property type="evidence" value="ECO:0007669"/>
    <property type="project" value="UniProtKB-UniRule"/>
</dbReference>
<dbReference type="GO" id="GO:0075521">
    <property type="term" value="P:microtubule-dependent intracellular transport of viral material towards nucleus"/>
    <property type="evidence" value="ECO:0007669"/>
    <property type="project" value="UniProtKB-UniRule"/>
</dbReference>
<dbReference type="GO" id="GO:0046718">
    <property type="term" value="P:symbiont entry into host cell"/>
    <property type="evidence" value="ECO:0007669"/>
    <property type="project" value="UniProtKB-UniRule"/>
</dbReference>
<dbReference type="GO" id="GO:0075732">
    <property type="term" value="P:viral penetration into host nucleus"/>
    <property type="evidence" value="ECO:0007669"/>
    <property type="project" value="UniProtKB-UniRule"/>
</dbReference>
<dbReference type="Gene3D" id="1.10.4090.10">
    <property type="entry name" value="Viral capsid, core domain supefamily, Hepatitis B virus"/>
    <property type="match status" value="1"/>
</dbReference>
<dbReference type="HAMAP" id="MF_04076">
    <property type="entry name" value="HBV_HBEAG"/>
    <property type="match status" value="1"/>
</dbReference>
<dbReference type="InterPro" id="IPR013195">
    <property type="entry name" value="Hepatitis_B_virus_capsid_N"/>
</dbReference>
<dbReference type="InterPro" id="IPR002006">
    <property type="entry name" value="Hepatitis_core"/>
</dbReference>
<dbReference type="InterPro" id="IPR036459">
    <property type="entry name" value="Viral_capsid_core_dom_sf_HBV"/>
</dbReference>
<dbReference type="Pfam" id="PF08290">
    <property type="entry name" value="Hep_core_N"/>
    <property type="match status" value="1"/>
</dbReference>
<dbReference type="Pfam" id="PF00906">
    <property type="entry name" value="Hepatitis_core"/>
    <property type="match status" value="2"/>
</dbReference>
<dbReference type="SUPFAM" id="SSF47852">
    <property type="entry name" value="Hepatitis B viral capsid (hbcag)"/>
    <property type="match status" value="1"/>
</dbReference>
<proteinExistence type="inferred from homology"/>
<protein>
    <recommendedName>
        <fullName evidence="2">External core antigen</fullName>
    </recommendedName>
    <alternativeName>
        <fullName evidence="2">HBeAg</fullName>
    </alternativeName>
    <alternativeName>
        <fullName evidence="2">Precore protein</fullName>
    </alternativeName>
    <alternativeName>
        <fullName evidence="2">p25</fullName>
    </alternativeName>
</protein>
<sequence length="217" mass="25010">MYLFHLCLVFACVPCPTFQASKLCLGWLWGMDIDPYKEFGSSYQLLNFLPLDFFPDLNALVDTATALYEEELTGREHCSPHHTAIRQALVCWDELTKLIAWMSSNITSEQVRTIIVNHVNDTWGLKVRQSLWFHLSCLTFGQHTVQEFLVSFVVWIRTPAPYRPPNAPILSTLPEHTVIRRGGARASRSPRRRTPSPRRRRSQSPRRRRSQSPSANC</sequence>
<keyword id="KW-0024">Alternative initiation</keyword>
<keyword id="KW-1015">Disulfide bond</keyword>
<keyword id="KW-1048">Host nucleus</keyword>
<keyword id="KW-0945">Host-virus interaction</keyword>
<keyword id="KW-0677">Repeat</keyword>
<keyword id="KW-0964">Secreted</keyword>
<keyword id="KW-0732">Signal</keyword>
<keyword id="KW-0899">Viral immunoevasion</keyword>
<accession>P0C6J3</accession>
<organism>
    <name type="scientific">Woodchuck hepatitis B virus (isolate 2)</name>
    <name type="common">WHV</name>
    <dbReference type="NCBI Taxonomy" id="341946"/>
    <lineage>
        <taxon>Viruses</taxon>
        <taxon>Riboviria</taxon>
        <taxon>Pararnavirae</taxon>
        <taxon>Artverviricota</taxon>
        <taxon>Revtraviricetes</taxon>
        <taxon>Blubervirales</taxon>
        <taxon>Hepadnaviridae</taxon>
        <taxon>Orthohepadnavirus</taxon>
        <taxon>Woodchuck hepatitis virus</taxon>
    </lineage>
</organism>
<feature type="signal peptide" evidence="2">
    <location>
        <begin position="1"/>
        <end position="19"/>
    </location>
</feature>
<feature type="chain" id="PRO_0000324742" description="External core antigen" evidence="2">
    <location>
        <begin position="20"/>
        <end position="217"/>
    </location>
</feature>
<feature type="propeptide" id="PRO_0000324743" evidence="1">
    <location>
        <begin position="189"/>
        <end position="217"/>
    </location>
</feature>
<feature type="repeat" description="1; half-length">
    <location>
        <begin position="189"/>
        <end position="195"/>
    </location>
</feature>
<feature type="repeat" description="2">
    <location>
        <begin position="196"/>
        <end position="203"/>
    </location>
</feature>
<feature type="repeat" description="3">
    <location>
        <begin position="204"/>
        <end position="211"/>
    </location>
</feature>
<feature type="region of interest" description="HBEAG" evidence="2">
    <location>
        <begin position="26"/>
        <end position="28"/>
    </location>
</feature>
<feature type="region of interest" description="Disordered" evidence="3">
    <location>
        <begin position="180"/>
        <end position="217"/>
    </location>
</feature>
<feature type="region of interest" description="3 X 8 AA repeats of S-P-R-R-R-R-S-Q">
    <location>
        <begin position="189"/>
        <end position="211"/>
    </location>
</feature>
<feature type="compositionally biased region" description="Basic residues" evidence="3">
    <location>
        <begin position="188"/>
        <end position="210"/>
    </location>
</feature>
<feature type="site" description="Cleavage; by host" evidence="2">
    <location>
        <begin position="188"/>
        <end position="189"/>
    </location>
</feature>
<feature type="disulfide bond" description="Interchain" evidence="2">
    <location>
        <position position="78"/>
    </location>
</feature>
<feature type="disulfide bond" description="Interchain" evidence="2">
    <location>
        <position position="91"/>
    </location>
</feature>